<dbReference type="EMBL" id="CP000462">
    <property type="protein sequence ID" value="ABK38409.1"/>
    <property type="molecule type" value="Genomic_DNA"/>
</dbReference>
<dbReference type="RefSeq" id="WP_011706138.1">
    <property type="nucleotide sequence ID" value="NC_008570.1"/>
</dbReference>
<dbReference type="RefSeq" id="YP_856809.1">
    <property type="nucleotide sequence ID" value="NC_008570.1"/>
</dbReference>
<dbReference type="SMR" id="A0KKK8"/>
<dbReference type="STRING" id="380703.AHA_2286"/>
<dbReference type="EnsemblBacteria" id="ABK38409">
    <property type="protein sequence ID" value="ABK38409"/>
    <property type="gene ID" value="AHA_2286"/>
</dbReference>
<dbReference type="GeneID" id="4488939"/>
<dbReference type="KEGG" id="aha:AHA_2286"/>
<dbReference type="PATRIC" id="fig|380703.7.peg.2286"/>
<dbReference type="eggNOG" id="ENOG502Z8AH">
    <property type="taxonomic scope" value="Bacteria"/>
</dbReference>
<dbReference type="HOGENOM" id="CLU_128248_0_0_6"/>
<dbReference type="OrthoDB" id="5765005at2"/>
<dbReference type="Proteomes" id="UP000000756">
    <property type="component" value="Chromosome"/>
</dbReference>
<dbReference type="GO" id="GO:0005737">
    <property type="term" value="C:cytoplasm"/>
    <property type="evidence" value="ECO:0007669"/>
    <property type="project" value="UniProtKB-SubCell"/>
</dbReference>
<dbReference type="GO" id="GO:0000917">
    <property type="term" value="P:division septum assembly"/>
    <property type="evidence" value="ECO:0007669"/>
    <property type="project" value="UniProtKB-KW"/>
</dbReference>
<dbReference type="GO" id="GO:0043093">
    <property type="term" value="P:FtsZ-dependent cytokinesis"/>
    <property type="evidence" value="ECO:0007669"/>
    <property type="project" value="UniProtKB-UniRule"/>
</dbReference>
<dbReference type="HAMAP" id="MF_00906">
    <property type="entry name" value="ZapC"/>
    <property type="match status" value="1"/>
</dbReference>
<dbReference type="InterPro" id="IPR009809">
    <property type="entry name" value="ZapC"/>
</dbReference>
<dbReference type="InterPro" id="IPR048372">
    <property type="entry name" value="ZapC_C"/>
</dbReference>
<dbReference type="InterPro" id="IPR048373">
    <property type="entry name" value="ZapC_N"/>
</dbReference>
<dbReference type="Pfam" id="PF07126">
    <property type="entry name" value="ZapC_C"/>
    <property type="match status" value="1"/>
</dbReference>
<dbReference type="Pfam" id="PF21083">
    <property type="entry name" value="ZapC_N"/>
    <property type="match status" value="1"/>
</dbReference>
<dbReference type="PIRSF" id="PIRSF010252">
    <property type="entry name" value="ZapC"/>
    <property type="match status" value="1"/>
</dbReference>
<comment type="function">
    <text evidence="1">Contributes to the efficiency of the cell division process by stabilizing the polymeric form of the cell division protein FtsZ. Acts by promoting interactions between FtsZ protofilaments and suppressing the GTPase activity of FtsZ.</text>
</comment>
<comment type="subunit">
    <text evidence="1">Interacts directly with FtsZ.</text>
</comment>
<comment type="subcellular location">
    <subcellularLocation>
        <location evidence="1">Cytoplasm</location>
    </subcellularLocation>
</comment>
<comment type="similarity">
    <text evidence="1">Belongs to the ZapC family.</text>
</comment>
<sequence length="178" mass="20279">MCIQPNDNWQWHYDAHDDRLMLDLSDRMIFATEYKGRQLVPSSFTTQPFCVDDAALYYQLMDRVAELEWSVPHQVQLVLNAIAVSRFYKPLMPQSWFFGETHPAIIPETGALVCMGTPHGKGEFLVIEAGEQASVCLNLTDDLILTTSKTLPRFGVIKVMNNRMSPRPVAQAQYRQVS</sequence>
<feature type="chain" id="PRO_0000413774" description="Cell division protein ZapC">
    <location>
        <begin position="1"/>
        <end position="178"/>
    </location>
</feature>
<gene>
    <name evidence="1" type="primary">zapC</name>
    <name type="ordered locus">AHA_2286</name>
</gene>
<keyword id="KW-0131">Cell cycle</keyword>
<keyword id="KW-0132">Cell division</keyword>
<keyword id="KW-0963">Cytoplasm</keyword>
<keyword id="KW-1185">Reference proteome</keyword>
<keyword id="KW-0717">Septation</keyword>
<evidence type="ECO:0000255" key="1">
    <source>
        <dbReference type="HAMAP-Rule" id="MF_00906"/>
    </source>
</evidence>
<name>ZAPC_AERHH</name>
<organism>
    <name type="scientific">Aeromonas hydrophila subsp. hydrophila (strain ATCC 7966 / DSM 30187 / BCRC 13018 / CCUG 14551 / JCM 1027 / KCTC 2358 / NCIMB 9240 / NCTC 8049)</name>
    <dbReference type="NCBI Taxonomy" id="380703"/>
    <lineage>
        <taxon>Bacteria</taxon>
        <taxon>Pseudomonadati</taxon>
        <taxon>Pseudomonadota</taxon>
        <taxon>Gammaproteobacteria</taxon>
        <taxon>Aeromonadales</taxon>
        <taxon>Aeromonadaceae</taxon>
        <taxon>Aeromonas</taxon>
    </lineage>
</organism>
<accession>A0KKK8</accession>
<proteinExistence type="inferred from homology"/>
<protein>
    <recommendedName>
        <fullName evidence="1">Cell division protein ZapC</fullName>
    </recommendedName>
</protein>
<reference key="1">
    <citation type="journal article" date="2006" name="J. Bacteriol.">
        <title>Genome sequence of Aeromonas hydrophila ATCC 7966T: jack of all trades.</title>
        <authorList>
            <person name="Seshadri R."/>
            <person name="Joseph S.W."/>
            <person name="Chopra A.K."/>
            <person name="Sha J."/>
            <person name="Shaw J."/>
            <person name="Graf J."/>
            <person name="Haft D.H."/>
            <person name="Wu M."/>
            <person name="Ren Q."/>
            <person name="Rosovitz M.J."/>
            <person name="Madupu R."/>
            <person name="Tallon L."/>
            <person name="Kim M."/>
            <person name="Jin S."/>
            <person name="Vuong H."/>
            <person name="Stine O.C."/>
            <person name="Ali A."/>
            <person name="Horneman A.J."/>
            <person name="Heidelberg J.F."/>
        </authorList>
    </citation>
    <scope>NUCLEOTIDE SEQUENCE [LARGE SCALE GENOMIC DNA]</scope>
    <source>
        <strain>ATCC 7966 / DSM 30187 / BCRC 13018 / CCUG 14551 / JCM 1027 / KCTC 2358 / NCIMB 9240 / NCTC 8049</strain>
    </source>
</reference>